<evidence type="ECO:0000255" key="1">
    <source>
        <dbReference type="HAMAP-Rule" id="MF_01331"/>
    </source>
</evidence>
<evidence type="ECO:0000305" key="2"/>
<gene>
    <name evidence="1" type="primary">rplV</name>
    <name type="ordered locus">LPC_3008</name>
</gene>
<keyword id="KW-0687">Ribonucleoprotein</keyword>
<keyword id="KW-0689">Ribosomal protein</keyword>
<keyword id="KW-0694">RNA-binding</keyword>
<keyword id="KW-0699">rRNA-binding</keyword>
<protein>
    <recommendedName>
        <fullName evidence="1">Large ribosomal subunit protein uL22</fullName>
    </recommendedName>
    <alternativeName>
        <fullName evidence="2">50S ribosomal protein L22</fullName>
    </alternativeName>
</protein>
<sequence length="111" mass="12021">MEVTAKLKGAPLSAQKGRLVADMIRNMNVSGALDVLKFTPKKGAKLMLKLLESAIANAENNNGADIDDLKVGMVCVDEATTLKRISPRAKGRANRICKRTCHITIKVSDEE</sequence>
<reference key="1">
    <citation type="submission" date="2006-11" db="EMBL/GenBank/DDBJ databases">
        <title>Identification and characterization of a new conjugation/ type IVA secretion system (trb/tra) of L. pneumophila Corby localized on a mobile genomic island.</title>
        <authorList>
            <person name="Gloeckner G."/>
            <person name="Albert-Weissenberger C."/>
            <person name="Weinmann E."/>
            <person name="Jacobi S."/>
            <person name="Schunder E."/>
            <person name="Steinert M."/>
            <person name="Buchrieser C."/>
            <person name="Hacker J."/>
            <person name="Heuner K."/>
        </authorList>
    </citation>
    <scope>NUCLEOTIDE SEQUENCE [LARGE SCALE GENOMIC DNA]</scope>
    <source>
        <strain>Corby</strain>
    </source>
</reference>
<dbReference type="EMBL" id="CP000675">
    <property type="protein sequence ID" value="ABQ56909.1"/>
    <property type="molecule type" value="Genomic_DNA"/>
</dbReference>
<dbReference type="RefSeq" id="WP_010946083.1">
    <property type="nucleotide sequence ID" value="NZ_JAPMSS010000006.1"/>
</dbReference>
<dbReference type="SMR" id="A5IHQ9"/>
<dbReference type="GeneID" id="57034337"/>
<dbReference type="KEGG" id="lpc:LPC_3008"/>
<dbReference type="HOGENOM" id="CLU_083987_3_3_6"/>
<dbReference type="GO" id="GO:0022625">
    <property type="term" value="C:cytosolic large ribosomal subunit"/>
    <property type="evidence" value="ECO:0007669"/>
    <property type="project" value="TreeGrafter"/>
</dbReference>
<dbReference type="GO" id="GO:0019843">
    <property type="term" value="F:rRNA binding"/>
    <property type="evidence" value="ECO:0007669"/>
    <property type="project" value="UniProtKB-UniRule"/>
</dbReference>
<dbReference type="GO" id="GO:0003735">
    <property type="term" value="F:structural constituent of ribosome"/>
    <property type="evidence" value="ECO:0007669"/>
    <property type="project" value="InterPro"/>
</dbReference>
<dbReference type="GO" id="GO:0006412">
    <property type="term" value="P:translation"/>
    <property type="evidence" value="ECO:0007669"/>
    <property type="project" value="UniProtKB-UniRule"/>
</dbReference>
<dbReference type="CDD" id="cd00336">
    <property type="entry name" value="Ribosomal_L22"/>
    <property type="match status" value="1"/>
</dbReference>
<dbReference type="Gene3D" id="3.90.470.10">
    <property type="entry name" value="Ribosomal protein L22/L17"/>
    <property type="match status" value="1"/>
</dbReference>
<dbReference type="HAMAP" id="MF_01331_B">
    <property type="entry name" value="Ribosomal_uL22_B"/>
    <property type="match status" value="1"/>
</dbReference>
<dbReference type="InterPro" id="IPR001063">
    <property type="entry name" value="Ribosomal_uL22"/>
</dbReference>
<dbReference type="InterPro" id="IPR005727">
    <property type="entry name" value="Ribosomal_uL22_bac/chlpt-type"/>
</dbReference>
<dbReference type="InterPro" id="IPR047867">
    <property type="entry name" value="Ribosomal_uL22_bac/org-type"/>
</dbReference>
<dbReference type="InterPro" id="IPR018260">
    <property type="entry name" value="Ribosomal_uL22_CS"/>
</dbReference>
<dbReference type="InterPro" id="IPR036394">
    <property type="entry name" value="Ribosomal_uL22_sf"/>
</dbReference>
<dbReference type="NCBIfam" id="TIGR01044">
    <property type="entry name" value="rplV_bact"/>
    <property type="match status" value="1"/>
</dbReference>
<dbReference type="PANTHER" id="PTHR13501">
    <property type="entry name" value="CHLOROPLAST 50S RIBOSOMAL PROTEIN L22-RELATED"/>
    <property type="match status" value="1"/>
</dbReference>
<dbReference type="PANTHER" id="PTHR13501:SF8">
    <property type="entry name" value="LARGE RIBOSOMAL SUBUNIT PROTEIN UL22M"/>
    <property type="match status" value="1"/>
</dbReference>
<dbReference type="Pfam" id="PF00237">
    <property type="entry name" value="Ribosomal_L22"/>
    <property type="match status" value="1"/>
</dbReference>
<dbReference type="SUPFAM" id="SSF54843">
    <property type="entry name" value="Ribosomal protein L22"/>
    <property type="match status" value="1"/>
</dbReference>
<dbReference type="PROSITE" id="PS00464">
    <property type="entry name" value="RIBOSOMAL_L22"/>
    <property type="match status" value="1"/>
</dbReference>
<accession>A5IHQ9</accession>
<proteinExistence type="inferred from homology"/>
<comment type="function">
    <text evidence="1">This protein binds specifically to 23S rRNA; its binding is stimulated by other ribosomal proteins, e.g. L4, L17, and L20. It is important during the early stages of 50S assembly. It makes multiple contacts with different domains of the 23S rRNA in the assembled 50S subunit and ribosome (By similarity).</text>
</comment>
<comment type="function">
    <text evidence="1">The globular domain of the protein is located near the polypeptide exit tunnel on the outside of the subunit, while an extended beta-hairpin is found that lines the wall of the exit tunnel in the center of the 70S ribosome.</text>
</comment>
<comment type="subunit">
    <text evidence="1">Part of the 50S ribosomal subunit.</text>
</comment>
<comment type="similarity">
    <text evidence="1">Belongs to the universal ribosomal protein uL22 family.</text>
</comment>
<name>RL22_LEGPC</name>
<organism>
    <name type="scientific">Legionella pneumophila (strain Corby)</name>
    <dbReference type="NCBI Taxonomy" id="400673"/>
    <lineage>
        <taxon>Bacteria</taxon>
        <taxon>Pseudomonadati</taxon>
        <taxon>Pseudomonadota</taxon>
        <taxon>Gammaproteobacteria</taxon>
        <taxon>Legionellales</taxon>
        <taxon>Legionellaceae</taxon>
        <taxon>Legionella</taxon>
    </lineage>
</organism>
<feature type="chain" id="PRO_1000052597" description="Large ribosomal subunit protein uL22">
    <location>
        <begin position="1"/>
        <end position="111"/>
    </location>
</feature>